<keyword id="KW-0067">ATP-binding</keyword>
<keyword id="KW-0997">Cell inner membrane</keyword>
<keyword id="KW-1003">Cell membrane</keyword>
<keyword id="KW-0472">Membrane</keyword>
<keyword id="KW-0547">Nucleotide-binding</keyword>
<keyword id="KW-1278">Translocase</keyword>
<keyword id="KW-0813">Transport</keyword>
<name>BTUD_VIBC3</name>
<sequence length="251" mass="27526">MIRVNSLQVDSRLLPLSLQANAGEVWHVIGPNGCGKSTLLAALAGMIPFSGSVQVGGLNVSQASLSELARHRAYLAQNDKPSFQLHVFQYLALSVPANVALERSEVASEIDQISRLLNIDDKLHRSIHQLSGGEWQRVRLAGSCLQVSPVLNPSARLLIWDEPAAPLDIAQESLLYRLIERMAGQGLTVIMANHDLNRTLRHADQVLLLSRGVLYRAGSAKEVLTQEVLQSVFGTSIRRVELEGHPHLLFD</sequence>
<comment type="function">
    <text evidence="1">Part of the ABC transporter complex BtuCDF involved in vitamin B12 import. Responsible for energy coupling to the transport system.</text>
</comment>
<comment type="catalytic activity">
    <reaction evidence="1">
        <text>an R-cob(III)alamin(out) + ATP + H2O = an R-cob(III)alamin(in) + ADP + phosphate + H(+)</text>
        <dbReference type="Rhea" id="RHEA:17873"/>
        <dbReference type="ChEBI" id="CHEBI:15377"/>
        <dbReference type="ChEBI" id="CHEBI:15378"/>
        <dbReference type="ChEBI" id="CHEBI:30616"/>
        <dbReference type="ChEBI" id="CHEBI:43474"/>
        <dbReference type="ChEBI" id="CHEBI:140785"/>
        <dbReference type="ChEBI" id="CHEBI:456216"/>
        <dbReference type="EC" id="7.6.2.8"/>
    </reaction>
</comment>
<comment type="subunit">
    <text evidence="1">The complex is composed of two ATP-binding proteins (BtuD), two transmembrane proteins (BtuC) and a solute-binding protein (BtuF).</text>
</comment>
<comment type="subcellular location">
    <subcellularLocation>
        <location evidence="1">Cell inner membrane</location>
        <topology evidence="1">Peripheral membrane protein</topology>
    </subcellularLocation>
</comment>
<comment type="similarity">
    <text evidence="1">Belongs to the ABC transporter superfamily. Vitamin B12 importer (TC 3.A.1.13.1) family.</text>
</comment>
<dbReference type="EC" id="7.6.2.8" evidence="1"/>
<dbReference type="EMBL" id="CP000627">
    <property type="protein sequence ID" value="ABQ20972.1"/>
    <property type="molecule type" value="Genomic_DNA"/>
</dbReference>
<dbReference type="EMBL" id="CP001235">
    <property type="protein sequence ID" value="ACP09372.1"/>
    <property type="molecule type" value="Genomic_DNA"/>
</dbReference>
<dbReference type="RefSeq" id="WP_000621847.1">
    <property type="nucleotide sequence ID" value="NZ_JAACZH010000002.1"/>
</dbReference>
<dbReference type="SMR" id="A5F1V0"/>
<dbReference type="KEGG" id="vco:VC0395_A0865"/>
<dbReference type="KEGG" id="vcr:VC395_1364"/>
<dbReference type="PATRIC" id="fig|345073.21.peg.1324"/>
<dbReference type="eggNOG" id="COG4138">
    <property type="taxonomic scope" value="Bacteria"/>
</dbReference>
<dbReference type="HOGENOM" id="CLU_000604_1_11_6"/>
<dbReference type="OrthoDB" id="5292475at2"/>
<dbReference type="BRENDA" id="7.6.2.8">
    <property type="organism ID" value="15862"/>
</dbReference>
<dbReference type="Proteomes" id="UP000000249">
    <property type="component" value="Chromosome 2"/>
</dbReference>
<dbReference type="GO" id="GO:0005886">
    <property type="term" value="C:plasma membrane"/>
    <property type="evidence" value="ECO:0007669"/>
    <property type="project" value="UniProtKB-SubCell"/>
</dbReference>
<dbReference type="GO" id="GO:0015420">
    <property type="term" value="F:ABC-type vitamin B12 transporter activity"/>
    <property type="evidence" value="ECO:0007669"/>
    <property type="project" value="UniProtKB-UniRule"/>
</dbReference>
<dbReference type="GO" id="GO:0005524">
    <property type="term" value="F:ATP binding"/>
    <property type="evidence" value="ECO:0007669"/>
    <property type="project" value="UniProtKB-KW"/>
</dbReference>
<dbReference type="GO" id="GO:0016887">
    <property type="term" value="F:ATP hydrolysis activity"/>
    <property type="evidence" value="ECO:0007669"/>
    <property type="project" value="InterPro"/>
</dbReference>
<dbReference type="CDD" id="cd03214">
    <property type="entry name" value="ABC_Iron-Siderophores_B12_Hemin"/>
    <property type="match status" value="1"/>
</dbReference>
<dbReference type="FunFam" id="3.40.50.300:FF:000462">
    <property type="entry name" value="Vitamin B12 import ATP-binding protein BtuD"/>
    <property type="match status" value="1"/>
</dbReference>
<dbReference type="Gene3D" id="3.40.50.300">
    <property type="entry name" value="P-loop containing nucleotide triphosphate hydrolases"/>
    <property type="match status" value="1"/>
</dbReference>
<dbReference type="HAMAP" id="MF_01005">
    <property type="entry name" value="BtuD"/>
    <property type="match status" value="1"/>
</dbReference>
<dbReference type="InterPro" id="IPR003593">
    <property type="entry name" value="AAA+_ATPase"/>
</dbReference>
<dbReference type="InterPro" id="IPR003439">
    <property type="entry name" value="ABC_transporter-like_ATP-bd"/>
</dbReference>
<dbReference type="InterPro" id="IPR023693">
    <property type="entry name" value="ABC_transptr_BtuD"/>
</dbReference>
<dbReference type="InterPro" id="IPR050153">
    <property type="entry name" value="Metal_Ion_Import_ABC"/>
</dbReference>
<dbReference type="InterPro" id="IPR027417">
    <property type="entry name" value="P-loop_NTPase"/>
</dbReference>
<dbReference type="NCBIfam" id="NF002981">
    <property type="entry name" value="PRK03695.1"/>
    <property type="match status" value="1"/>
</dbReference>
<dbReference type="PANTHER" id="PTHR42734">
    <property type="entry name" value="METAL TRANSPORT SYSTEM ATP-BINDING PROTEIN TM_0124-RELATED"/>
    <property type="match status" value="1"/>
</dbReference>
<dbReference type="PANTHER" id="PTHR42734:SF18">
    <property type="entry name" value="VITAMIN B12 IMPORT ATP-BINDING PROTEIN BTUD"/>
    <property type="match status" value="1"/>
</dbReference>
<dbReference type="Pfam" id="PF00005">
    <property type="entry name" value="ABC_tran"/>
    <property type="match status" value="1"/>
</dbReference>
<dbReference type="SMART" id="SM00382">
    <property type="entry name" value="AAA"/>
    <property type="match status" value="1"/>
</dbReference>
<dbReference type="SUPFAM" id="SSF52540">
    <property type="entry name" value="P-loop containing nucleoside triphosphate hydrolases"/>
    <property type="match status" value="1"/>
</dbReference>
<dbReference type="PROSITE" id="PS50893">
    <property type="entry name" value="ABC_TRANSPORTER_2"/>
    <property type="match status" value="1"/>
</dbReference>
<proteinExistence type="inferred from homology"/>
<gene>
    <name evidence="1" type="primary">btuD</name>
    <name type="ordered locus">VC0395_A0865</name>
    <name type="ordered locus">VC395_1364</name>
</gene>
<feature type="chain" id="PRO_1000083969" description="Vitamin B12 import ATP-binding protein BtuD">
    <location>
        <begin position="1"/>
        <end position="251"/>
    </location>
</feature>
<feature type="domain" description="ABC transporter" evidence="1">
    <location>
        <begin position="2"/>
        <end position="236"/>
    </location>
</feature>
<feature type="binding site" evidence="1">
    <location>
        <begin position="30"/>
        <end position="37"/>
    </location>
    <ligand>
        <name>ATP</name>
        <dbReference type="ChEBI" id="CHEBI:30616"/>
    </ligand>
</feature>
<evidence type="ECO:0000255" key="1">
    <source>
        <dbReference type="HAMAP-Rule" id="MF_01005"/>
    </source>
</evidence>
<protein>
    <recommendedName>
        <fullName evidence="1">Vitamin B12 import ATP-binding protein BtuD</fullName>
        <ecNumber evidence="1">7.6.2.8</ecNumber>
    </recommendedName>
    <alternativeName>
        <fullName evidence="1">Vitamin B12-transporting ATPase</fullName>
    </alternativeName>
</protein>
<reference key="1">
    <citation type="submission" date="2007-03" db="EMBL/GenBank/DDBJ databases">
        <authorList>
            <person name="Heidelberg J."/>
        </authorList>
    </citation>
    <scope>NUCLEOTIDE SEQUENCE [LARGE SCALE GENOMIC DNA]</scope>
    <source>
        <strain>ATCC 39541 / Classical Ogawa 395 / O395</strain>
    </source>
</reference>
<reference key="2">
    <citation type="journal article" date="2008" name="PLoS ONE">
        <title>A recalibrated molecular clock and independent origins for the cholera pandemic clones.</title>
        <authorList>
            <person name="Feng L."/>
            <person name="Reeves P.R."/>
            <person name="Lan R."/>
            <person name="Ren Y."/>
            <person name="Gao C."/>
            <person name="Zhou Z."/>
            <person name="Ren Y."/>
            <person name="Cheng J."/>
            <person name="Wang W."/>
            <person name="Wang J."/>
            <person name="Qian W."/>
            <person name="Li D."/>
            <person name="Wang L."/>
        </authorList>
    </citation>
    <scope>NUCLEOTIDE SEQUENCE [LARGE SCALE GENOMIC DNA]</scope>
    <source>
        <strain>ATCC 39541 / Classical Ogawa 395 / O395</strain>
    </source>
</reference>
<organism>
    <name type="scientific">Vibrio cholerae serotype O1 (strain ATCC 39541 / Classical Ogawa 395 / O395)</name>
    <dbReference type="NCBI Taxonomy" id="345073"/>
    <lineage>
        <taxon>Bacteria</taxon>
        <taxon>Pseudomonadati</taxon>
        <taxon>Pseudomonadota</taxon>
        <taxon>Gammaproteobacteria</taxon>
        <taxon>Vibrionales</taxon>
        <taxon>Vibrionaceae</taxon>
        <taxon>Vibrio</taxon>
    </lineage>
</organism>
<accession>A5F1V0</accession>
<accession>C3M006</accession>